<proteinExistence type="evidence at protein level"/>
<feature type="chain" id="PRO_0000127211" description="Transcription factor HES-4">
    <location>
        <begin position="1"/>
        <end position="221"/>
    </location>
</feature>
<feature type="domain" description="bHLH" evidence="3">
    <location>
        <begin position="34"/>
        <end position="91"/>
    </location>
</feature>
<feature type="domain" description="Orange" evidence="2">
    <location>
        <begin position="110"/>
        <end position="143"/>
    </location>
</feature>
<feature type="region of interest" description="Disordered" evidence="4">
    <location>
        <begin position="1"/>
        <end position="49"/>
    </location>
</feature>
<feature type="region of interest" description="Disordered" evidence="4">
    <location>
        <begin position="201"/>
        <end position="221"/>
    </location>
</feature>
<feature type="short sequence motif" description="WRPW motif">
    <location>
        <begin position="216"/>
        <end position="219"/>
    </location>
</feature>
<feature type="compositionally biased region" description="Low complexity" evidence="4">
    <location>
        <begin position="1"/>
        <end position="22"/>
    </location>
</feature>
<feature type="compositionally biased region" description="Basic and acidic residues" evidence="4">
    <location>
        <begin position="24"/>
        <end position="35"/>
    </location>
</feature>
<sequence length="221" mass="23523">MAADTPGKPSASPMAGAPASASRTPDKPRSAAEHRKSSKPVMEKRRRARINESLAQLKTLILDALRKESSRHSKLEKADILEMTVRHLRSLRRVQVTAALSADPAVLGKYRAGFHECLAEVNRFLAGCEGVPADVRSRLLGHLAACLRQLGPSRRPASLSPAAPAEAPAPEVYAGRPLLPSLGGPFPLLAPPLLPGLTRALPAAPRAGPQGPGGPWRPWLR</sequence>
<dbReference type="EMBL" id="AB048791">
    <property type="protein sequence ID" value="BAB13510.1"/>
    <property type="molecule type" value="mRNA"/>
</dbReference>
<dbReference type="EMBL" id="AL645608">
    <property type="status" value="NOT_ANNOTATED_CDS"/>
    <property type="molecule type" value="Genomic_DNA"/>
</dbReference>
<dbReference type="EMBL" id="BC012351">
    <property type="protein sequence ID" value="AAH12351.1"/>
    <property type="molecule type" value="mRNA"/>
</dbReference>
<dbReference type="CCDS" id="CCDS5.1"/>
<dbReference type="RefSeq" id="NP_001135939.1">
    <property type="nucleotide sequence ID" value="NM_001142467.1"/>
</dbReference>
<dbReference type="RefSeq" id="NP_066993.1">
    <property type="nucleotide sequence ID" value="NM_021170.4"/>
</dbReference>
<dbReference type="SMR" id="Q9HCC6"/>
<dbReference type="BioGRID" id="121772">
    <property type="interactions" value="49"/>
</dbReference>
<dbReference type="FunCoup" id="Q9HCC6">
    <property type="interactions" value="480"/>
</dbReference>
<dbReference type="IntAct" id="Q9HCC6">
    <property type="interactions" value="33"/>
</dbReference>
<dbReference type="STRING" id="9606.ENSP00000393198"/>
<dbReference type="GlyGen" id="Q9HCC6">
    <property type="glycosylation" value="1 site, 1 O-linked glycan (1 site)"/>
</dbReference>
<dbReference type="iPTMnet" id="Q9HCC6"/>
<dbReference type="PhosphoSitePlus" id="Q9HCC6"/>
<dbReference type="BioMuta" id="HES4"/>
<dbReference type="jPOST" id="Q9HCC6"/>
<dbReference type="MassIVE" id="Q9HCC6"/>
<dbReference type="PeptideAtlas" id="Q9HCC6"/>
<dbReference type="ProteomicsDB" id="81667"/>
<dbReference type="Pumba" id="Q9HCC6"/>
<dbReference type="Antibodypedia" id="12001">
    <property type="antibodies" value="103 antibodies from 27 providers"/>
</dbReference>
<dbReference type="DNASU" id="57801"/>
<dbReference type="Ensembl" id="ENST00000304952.11">
    <property type="protein sequence ID" value="ENSP00000304595.7"/>
    <property type="gene ID" value="ENSG00000188290.11"/>
</dbReference>
<dbReference type="GeneID" id="57801"/>
<dbReference type="KEGG" id="hsa:57801"/>
<dbReference type="MANE-Select" id="ENST00000304952.11">
    <property type="protein sequence ID" value="ENSP00000304595.7"/>
    <property type="RefSeq nucleotide sequence ID" value="NM_021170.4"/>
    <property type="RefSeq protein sequence ID" value="NP_066993.1"/>
</dbReference>
<dbReference type="UCSC" id="uc001aci.3">
    <property type="organism name" value="human"/>
</dbReference>
<dbReference type="AGR" id="HGNC:24149"/>
<dbReference type="CTD" id="57801"/>
<dbReference type="DisGeNET" id="57801"/>
<dbReference type="GeneCards" id="HES4"/>
<dbReference type="HGNC" id="HGNC:24149">
    <property type="gene designation" value="HES4"/>
</dbReference>
<dbReference type="HPA" id="ENSG00000188290">
    <property type="expression patterns" value="Low tissue specificity"/>
</dbReference>
<dbReference type="MIM" id="608060">
    <property type="type" value="gene"/>
</dbReference>
<dbReference type="neXtProt" id="NX_Q9HCC6"/>
<dbReference type="OpenTargets" id="ENSG00000188290"/>
<dbReference type="PharmGKB" id="PA134975318"/>
<dbReference type="VEuPathDB" id="HostDB:ENSG00000188290"/>
<dbReference type="GeneTree" id="ENSGT00940000163056"/>
<dbReference type="HOGENOM" id="CLU_068550_1_1_1"/>
<dbReference type="InParanoid" id="Q9HCC6"/>
<dbReference type="OrthoDB" id="6085656at2759"/>
<dbReference type="PAN-GO" id="Q9HCC6">
    <property type="GO annotations" value="5 GO annotations based on evolutionary models"/>
</dbReference>
<dbReference type="PhylomeDB" id="Q9HCC6"/>
<dbReference type="PathwayCommons" id="Q9HCC6"/>
<dbReference type="SignaLink" id="Q9HCC6"/>
<dbReference type="BioGRID-ORCS" id="57801">
    <property type="hits" value="8 hits in 1177 CRISPR screens"/>
</dbReference>
<dbReference type="GenomeRNAi" id="57801"/>
<dbReference type="Pharos" id="Q9HCC6">
    <property type="development level" value="Tbio"/>
</dbReference>
<dbReference type="PRO" id="PR:Q9HCC6"/>
<dbReference type="Proteomes" id="UP000005640">
    <property type="component" value="Chromosome 1"/>
</dbReference>
<dbReference type="RNAct" id="Q9HCC6">
    <property type="molecule type" value="protein"/>
</dbReference>
<dbReference type="Bgee" id="ENSG00000188290">
    <property type="expression patterns" value="Expressed in ventricular zone and 156 other cell types or tissues"/>
</dbReference>
<dbReference type="ExpressionAtlas" id="Q9HCC6">
    <property type="expression patterns" value="baseline and differential"/>
</dbReference>
<dbReference type="GO" id="GO:0000785">
    <property type="term" value="C:chromatin"/>
    <property type="evidence" value="ECO:0000247"/>
    <property type="project" value="NTNU_SB"/>
</dbReference>
<dbReference type="GO" id="GO:0005634">
    <property type="term" value="C:nucleus"/>
    <property type="evidence" value="ECO:0000318"/>
    <property type="project" value="GO_Central"/>
</dbReference>
<dbReference type="GO" id="GO:0000981">
    <property type="term" value="F:DNA-binding transcription factor activity, RNA polymerase II-specific"/>
    <property type="evidence" value="ECO:0000247"/>
    <property type="project" value="NTNU_SB"/>
</dbReference>
<dbReference type="GO" id="GO:0046983">
    <property type="term" value="F:protein dimerization activity"/>
    <property type="evidence" value="ECO:0007669"/>
    <property type="project" value="InterPro"/>
</dbReference>
<dbReference type="GO" id="GO:0000978">
    <property type="term" value="F:RNA polymerase II cis-regulatory region sequence-specific DNA binding"/>
    <property type="evidence" value="ECO:0000318"/>
    <property type="project" value="GO_Central"/>
</dbReference>
<dbReference type="GO" id="GO:0030154">
    <property type="term" value="P:cell differentiation"/>
    <property type="evidence" value="ECO:0007669"/>
    <property type="project" value="UniProtKB-KW"/>
</dbReference>
<dbReference type="GO" id="GO:0007399">
    <property type="term" value="P:nervous system development"/>
    <property type="evidence" value="ECO:0007669"/>
    <property type="project" value="UniProtKB-KW"/>
</dbReference>
<dbReference type="CDD" id="cd11459">
    <property type="entry name" value="bHLH-O_HES1_4"/>
    <property type="match status" value="1"/>
</dbReference>
<dbReference type="FunFam" id="4.10.280.10:FF:000009">
    <property type="entry name" value="Transcription factor HES-1"/>
    <property type="match status" value="1"/>
</dbReference>
<dbReference type="Gene3D" id="6.10.250.980">
    <property type="match status" value="1"/>
</dbReference>
<dbReference type="Gene3D" id="4.10.280.10">
    <property type="entry name" value="Helix-loop-helix DNA-binding domain"/>
    <property type="match status" value="1"/>
</dbReference>
<dbReference type="InterPro" id="IPR011598">
    <property type="entry name" value="bHLH_dom"/>
</dbReference>
<dbReference type="InterPro" id="IPR050370">
    <property type="entry name" value="HES_HEY"/>
</dbReference>
<dbReference type="InterPro" id="IPR036638">
    <property type="entry name" value="HLH_DNA-bd_sf"/>
</dbReference>
<dbReference type="InterPro" id="IPR003650">
    <property type="entry name" value="Orange_dom"/>
</dbReference>
<dbReference type="PANTHER" id="PTHR10985">
    <property type="entry name" value="BASIC HELIX-LOOP-HELIX TRANSCRIPTION FACTOR, HES-RELATED"/>
    <property type="match status" value="1"/>
</dbReference>
<dbReference type="Pfam" id="PF07527">
    <property type="entry name" value="Hairy_orange"/>
    <property type="match status" value="1"/>
</dbReference>
<dbReference type="Pfam" id="PF00010">
    <property type="entry name" value="HLH"/>
    <property type="match status" value="1"/>
</dbReference>
<dbReference type="SMART" id="SM00353">
    <property type="entry name" value="HLH"/>
    <property type="match status" value="1"/>
</dbReference>
<dbReference type="SMART" id="SM00511">
    <property type="entry name" value="ORANGE"/>
    <property type="match status" value="1"/>
</dbReference>
<dbReference type="SUPFAM" id="SSF47459">
    <property type="entry name" value="HLH, helix-loop-helix DNA-binding domain"/>
    <property type="match status" value="1"/>
</dbReference>
<dbReference type="SUPFAM" id="SSF158457">
    <property type="entry name" value="Orange domain-like"/>
    <property type="match status" value="1"/>
</dbReference>
<dbReference type="PROSITE" id="PS50888">
    <property type="entry name" value="BHLH"/>
    <property type="match status" value="1"/>
</dbReference>
<dbReference type="PROSITE" id="PS51054">
    <property type="entry name" value="ORANGE"/>
    <property type="match status" value="1"/>
</dbReference>
<reference key="1">
    <citation type="journal article" date="2001" name="Genes Cells">
        <title>Hes7: a bHLH-type repressor gene regulated by Notch and expressed in the presomitic mesoderm.</title>
        <authorList>
            <person name="Bessho Y."/>
            <person name="Miyoshi G."/>
            <person name="Sakata R."/>
            <person name="Kageyama R."/>
        </authorList>
    </citation>
    <scope>NUCLEOTIDE SEQUENCE [MRNA]</scope>
</reference>
<reference key="2">
    <citation type="journal article" date="2006" name="Nature">
        <title>The DNA sequence and biological annotation of human chromosome 1.</title>
        <authorList>
            <person name="Gregory S.G."/>
            <person name="Barlow K.F."/>
            <person name="McLay K.E."/>
            <person name="Kaul R."/>
            <person name="Swarbreck D."/>
            <person name="Dunham A."/>
            <person name="Scott C.E."/>
            <person name="Howe K.L."/>
            <person name="Woodfine K."/>
            <person name="Spencer C.C.A."/>
            <person name="Jones M.C."/>
            <person name="Gillson C."/>
            <person name="Searle S."/>
            <person name="Zhou Y."/>
            <person name="Kokocinski F."/>
            <person name="McDonald L."/>
            <person name="Evans R."/>
            <person name="Phillips K."/>
            <person name="Atkinson A."/>
            <person name="Cooper R."/>
            <person name="Jones C."/>
            <person name="Hall R.E."/>
            <person name="Andrews T.D."/>
            <person name="Lloyd C."/>
            <person name="Ainscough R."/>
            <person name="Almeida J.P."/>
            <person name="Ambrose K.D."/>
            <person name="Anderson F."/>
            <person name="Andrew R.W."/>
            <person name="Ashwell R.I.S."/>
            <person name="Aubin K."/>
            <person name="Babbage A.K."/>
            <person name="Bagguley C.L."/>
            <person name="Bailey J."/>
            <person name="Beasley H."/>
            <person name="Bethel G."/>
            <person name="Bird C.P."/>
            <person name="Bray-Allen S."/>
            <person name="Brown J.Y."/>
            <person name="Brown A.J."/>
            <person name="Buckley D."/>
            <person name="Burton J."/>
            <person name="Bye J."/>
            <person name="Carder C."/>
            <person name="Chapman J.C."/>
            <person name="Clark S.Y."/>
            <person name="Clarke G."/>
            <person name="Clee C."/>
            <person name="Cobley V."/>
            <person name="Collier R.E."/>
            <person name="Corby N."/>
            <person name="Coville G.J."/>
            <person name="Davies J."/>
            <person name="Deadman R."/>
            <person name="Dunn M."/>
            <person name="Earthrowl M."/>
            <person name="Ellington A.G."/>
            <person name="Errington H."/>
            <person name="Frankish A."/>
            <person name="Frankland J."/>
            <person name="French L."/>
            <person name="Garner P."/>
            <person name="Garnett J."/>
            <person name="Gay L."/>
            <person name="Ghori M.R.J."/>
            <person name="Gibson R."/>
            <person name="Gilby L.M."/>
            <person name="Gillett W."/>
            <person name="Glithero R.J."/>
            <person name="Grafham D.V."/>
            <person name="Griffiths C."/>
            <person name="Griffiths-Jones S."/>
            <person name="Grocock R."/>
            <person name="Hammond S."/>
            <person name="Harrison E.S.I."/>
            <person name="Hart E."/>
            <person name="Haugen E."/>
            <person name="Heath P.D."/>
            <person name="Holmes S."/>
            <person name="Holt K."/>
            <person name="Howden P.J."/>
            <person name="Hunt A.R."/>
            <person name="Hunt S.E."/>
            <person name="Hunter G."/>
            <person name="Isherwood J."/>
            <person name="James R."/>
            <person name="Johnson C."/>
            <person name="Johnson D."/>
            <person name="Joy A."/>
            <person name="Kay M."/>
            <person name="Kershaw J.K."/>
            <person name="Kibukawa M."/>
            <person name="Kimberley A.M."/>
            <person name="King A."/>
            <person name="Knights A.J."/>
            <person name="Lad H."/>
            <person name="Laird G."/>
            <person name="Lawlor S."/>
            <person name="Leongamornlert D.A."/>
            <person name="Lloyd D.M."/>
            <person name="Loveland J."/>
            <person name="Lovell J."/>
            <person name="Lush M.J."/>
            <person name="Lyne R."/>
            <person name="Martin S."/>
            <person name="Mashreghi-Mohammadi M."/>
            <person name="Matthews L."/>
            <person name="Matthews N.S.W."/>
            <person name="McLaren S."/>
            <person name="Milne S."/>
            <person name="Mistry S."/>
            <person name="Moore M.J.F."/>
            <person name="Nickerson T."/>
            <person name="O'Dell C.N."/>
            <person name="Oliver K."/>
            <person name="Palmeiri A."/>
            <person name="Palmer S.A."/>
            <person name="Parker A."/>
            <person name="Patel D."/>
            <person name="Pearce A.V."/>
            <person name="Peck A.I."/>
            <person name="Pelan S."/>
            <person name="Phelps K."/>
            <person name="Phillimore B.J."/>
            <person name="Plumb R."/>
            <person name="Rajan J."/>
            <person name="Raymond C."/>
            <person name="Rouse G."/>
            <person name="Saenphimmachak C."/>
            <person name="Sehra H.K."/>
            <person name="Sheridan E."/>
            <person name="Shownkeen R."/>
            <person name="Sims S."/>
            <person name="Skuce C.D."/>
            <person name="Smith M."/>
            <person name="Steward C."/>
            <person name="Subramanian S."/>
            <person name="Sycamore N."/>
            <person name="Tracey A."/>
            <person name="Tromans A."/>
            <person name="Van Helmond Z."/>
            <person name="Wall M."/>
            <person name="Wallis J.M."/>
            <person name="White S."/>
            <person name="Whitehead S.L."/>
            <person name="Wilkinson J.E."/>
            <person name="Willey D.L."/>
            <person name="Williams H."/>
            <person name="Wilming L."/>
            <person name="Wray P.W."/>
            <person name="Wu Z."/>
            <person name="Coulson A."/>
            <person name="Vaudin M."/>
            <person name="Sulston J.E."/>
            <person name="Durbin R.M."/>
            <person name="Hubbard T."/>
            <person name="Wooster R."/>
            <person name="Dunham I."/>
            <person name="Carter N.P."/>
            <person name="McVean G."/>
            <person name="Ross M.T."/>
            <person name="Harrow J."/>
            <person name="Olson M.V."/>
            <person name="Beck S."/>
            <person name="Rogers J."/>
            <person name="Bentley D.R."/>
        </authorList>
    </citation>
    <scope>NUCLEOTIDE SEQUENCE [LARGE SCALE GENOMIC DNA]</scope>
</reference>
<reference key="3">
    <citation type="journal article" date="2004" name="Genome Res.">
        <title>The status, quality, and expansion of the NIH full-length cDNA project: the Mammalian Gene Collection (MGC).</title>
        <authorList>
            <consortium name="The MGC Project Team"/>
        </authorList>
    </citation>
    <scope>NUCLEOTIDE SEQUENCE [LARGE SCALE MRNA]</scope>
    <source>
        <tissue>Kidney</tissue>
    </source>
</reference>
<accession>Q9HCC6</accession>
<accession>Q5SVA5</accession>
<gene>
    <name type="primary">HES4</name>
    <name type="synonym">BHLHB42</name>
</gene>
<evidence type="ECO:0000250" key="1"/>
<evidence type="ECO:0000255" key="2">
    <source>
        <dbReference type="PROSITE-ProRule" id="PRU00380"/>
    </source>
</evidence>
<evidence type="ECO:0000255" key="3">
    <source>
        <dbReference type="PROSITE-ProRule" id="PRU00981"/>
    </source>
</evidence>
<evidence type="ECO:0000256" key="4">
    <source>
        <dbReference type="SAM" id="MobiDB-lite"/>
    </source>
</evidence>
<name>HES4_HUMAN</name>
<comment type="function">
    <text evidence="1">Transcriptional repressor. Binds DNA on N-box motifs: 5'-CACNAG-3' (By similarity).</text>
</comment>
<comment type="subunit">
    <text evidence="1">Transcription repression requires formation of a complex with a corepressor protein of the Groucho/TLE family.</text>
</comment>
<comment type="interaction">
    <interactant intactId="EBI-2680288">
        <id>Q9HCC6</id>
    </interactant>
    <interactant intactId="EBI-750300">
        <id>Q01658</id>
        <label>DR1</label>
    </interactant>
    <organismsDiffer>false</organismsDiffer>
    <experiments>3</experiments>
</comment>
<comment type="interaction">
    <interactant intactId="EBI-2680288">
        <id>Q9HCC6</id>
    </interactant>
    <interactant intactId="EBI-389564">
        <id>Q00403</id>
        <label>GTF2B</label>
    </interactant>
    <organismsDiffer>false</organismsDiffer>
    <experiments>3</experiments>
</comment>
<comment type="interaction">
    <interactant intactId="EBI-2680288">
        <id>Q9HCC6</id>
    </interactant>
    <interactant intactId="EBI-1054873">
        <id>Q9Y5Q9</id>
        <label>GTF3C3</label>
    </interactant>
    <organismsDiffer>false</organismsDiffer>
    <experiments>3</experiments>
</comment>
<comment type="interaction">
    <interactant intactId="EBI-2680288">
        <id>Q9HCC6</id>
    </interactant>
    <interactant intactId="EBI-466029">
        <id>P42858</id>
        <label>HTT</label>
    </interactant>
    <organismsDiffer>false</organismsDiffer>
    <experiments>12</experiments>
</comment>
<comment type="interaction">
    <interactant intactId="EBI-2680288">
        <id>Q9HCC6</id>
    </interactant>
    <interactant intactId="EBI-985879">
        <id>P37840</id>
        <label>SNCA</label>
    </interactant>
    <organismsDiffer>false</organismsDiffer>
    <experiments>3</experiments>
</comment>
<comment type="interaction">
    <interactant intactId="EBI-2680288">
        <id>Q9HCC6</id>
    </interactant>
    <interactant intactId="EBI-372899">
        <id>Q13148</id>
        <label>TARDBP</label>
    </interactant>
    <organismsDiffer>false</organismsDiffer>
    <experiments>6</experiments>
</comment>
<comment type="subcellular location">
    <subcellularLocation>
        <location evidence="2 3">Nucleus</location>
    </subcellularLocation>
</comment>
<comment type="domain">
    <text evidence="1">Has a particular type of basic domain (presence of a helix-interrupting proline) that binds to the N-box (CACNAG), rather than the canonical E-box (CANNTG).</text>
</comment>
<comment type="domain">
    <text evidence="1">The C-terminal WRPW motif is a transcriptional repression domain necessary for the interaction with Groucho/TLE family members, transcriptional corepressors recruited to specific target DNA by Hairy-related proteins.</text>
</comment>
<keyword id="KW-0217">Developmental protein</keyword>
<keyword id="KW-0221">Differentiation</keyword>
<keyword id="KW-0238">DNA-binding</keyword>
<keyword id="KW-0524">Neurogenesis</keyword>
<keyword id="KW-0539">Nucleus</keyword>
<keyword id="KW-1267">Proteomics identification</keyword>
<keyword id="KW-1185">Reference proteome</keyword>
<keyword id="KW-0678">Repressor</keyword>
<keyword id="KW-0804">Transcription</keyword>
<keyword id="KW-0805">Transcription regulation</keyword>
<organism>
    <name type="scientific">Homo sapiens</name>
    <name type="common">Human</name>
    <dbReference type="NCBI Taxonomy" id="9606"/>
    <lineage>
        <taxon>Eukaryota</taxon>
        <taxon>Metazoa</taxon>
        <taxon>Chordata</taxon>
        <taxon>Craniata</taxon>
        <taxon>Vertebrata</taxon>
        <taxon>Euteleostomi</taxon>
        <taxon>Mammalia</taxon>
        <taxon>Eutheria</taxon>
        <taxon>Euarchontoglires</taxon>
        <taxon>Primates</taxon>
        <taxon>Haplorrhini</taxon>
        <taxon>Catarrhini</taxon>
        <taxon>Hominidae</taxon>
        <taxon>Homo</taxon>
    </lineage>
</organism>
<protein>
    <recommendedName>
        <fullName>Transcription factor HES-4</fullName>
        <shortName>hHES4</shortName>
    </recommendedName>
    <alternativeName>
        <fullName>Class B basic helix-loop-helix protein 42</fullName>
        <shortName>bHLHb42</shortName>
    </alternativeName>
    <alternativeName>
        <fullName>Hairy and enhancer of split 4</fullName>
    </alternativeName>
    <alternativeName>
        <fullName>bHLH factor Hes4</fullName>
    </alternativeName>
</protein>